<organism>
    <name type="scientific">Shewanella sediminis (strain HAW-EB3)</name>
    <dbReference type="NCBI Taxonomy" id="425104"/>
    <lineage>
        <taxon>Bacteria</taxon>
        <taxon>Pseudomonadati</taxon>
        <taxon>Pseudomonadota</taxon>
        <taxon>Gammaproteobacteria</taxon>
        <taxon>Alteromonadales</taxon>
        <taxon>Shewanellaceae</taxon>
        <taxon>Shewanella</taxon>
    </lineage>
</organism>
<protein>
    <recommendedName>
        <fullName evidence="1">Molybdenum cofactor guanylyltransferase</fullName>
        <shortName evidence="1">MoCo guanylyltransferase</shortName>
        <ecNumber evidence="1">2.7.7.77</ecNumber>
    </recommendedName>
    <alternativeName>
        <fullName evidence="1">GTP:molybdopterin guanylyltransferase</fullName>
    </alternativeName>
    <alternativeName>
        <fullName evidence="1">Mo-MPT guanylyltransferase</fullName>
    </alternativeName>
    <alternativeName>
        <fullName evidence="1">Molybdopterin guanylyltransferase</fullName>
    </alternativeName>
    <alternativeName>
        <fullName evidence="1">Molybdopterin-guanine dinucleotide synthase</fullName>
        <shortName evidence="1">MGD synthase</shortName>
    </alternativeName>
</protein>
<feature type="chain" id="PRO_1000079115" description="Molybdenum cofactor guanylyltransferase">
    <location>
        <begin position="1"/>
        <end position="196"/>
    </location>
</feature>
<feature type="binding site" evidence="1">
    <location>
        <begin position="10"/>
        <end position="12"/>
    </location>
    <ligand>
        <name>GTP</name>
        <dbReference type="ChEBI" id="CHEBI:37565"/>
    </ligand>
</feature>
<feature type="binding site" evidence="1">
    <location>
        <position position="23"/>
    </location>
    <ligand>
        <name>GTP</name>
        <dbReference type="ChEBI" id="CHEBI:37565"/>
    </ligand>
</feature>
<feature type="binding site" evidence="1">
    <location>
        <position position="51"/>
    </location>
    <ligand>
        <name>GTP</name>
        <dbReference type="ChEBI" id="CHEBI:37565"/>
    </ligand>
</feature>
<feature type="binding site" evidence="1">
    <location>
        <position position="69"/>
    </location>
    <ligand>
        <name>GTP</name>
        <dbReference type="ChEBI" id="CHEBI:37565"/>
    </ligand>
</feature>
<feature type="binding site" evidence="1">
    <location>
        <position position="99"/>
    </location>
    <ligand>
        <name>GTP</name>
        <dbReference type="ChEBI" id="CHEBI:37565"/>
    </ligand>
</feature>
<feature type="binding site" evidence="1">
    <location>
        <position position="99"/>
    </location>
    <ligand>
        <name>Mg(2+)</name>
        <dbReference type="ChEBI" id="CHEBI:18420"/>
    </ligand>
</feature>
<dbReference type="EC" id="2.7.7.77" evidence="1"/>
<dbReference type="EMBL" id="CP000821">
    <property type="protein sequence ID" value="ABV34734.1"/>
    <property type="molecule type" value="Genomic_DNA"/>
</dbReference>
<dbReference type="RefSeq" id="WP_012004260.1">
    <property type="nucleotide sequence ID" value="NC_009831.1"/>
</dbReference>
<dbReference type="SMR" id="A8FPG1"/>
<dbReference type="STRING" id="425104.Ssed_0121"/>
<dbReference type="KEGG" id="sse:Ssed_0121"/>
<dbReference type="eggNOG" id="COG0746">
    <property type="taxonomic scope" value="Bacteria"/>
</dbReference>
<dbReference type="HOGENOM" id="CLU_055597_5_1_6"/>
<dbReference type="OrthoDB" id="9788394at2"/>
<dbReference type="Proteomes" id="UP000002015">
    <property type="component" value="Chromosome"/>
</dbReference>
<dbReference type="GO" id="GO:0005737">
    <property type="term" value="C:cytoplasm"/>
    <property type="evidence" value="ECO:0007669"/>
    <property type="project" value="UniProtKB-SubCell"/>
</dbReference>
<dbReference type="GO" id="GO:0005525">
    <property type="term" value="F:GTP binding"/>
    <property type="evidence" value="ECO:0007669"/>
    <property type="project" value="UniProtKB-UniRule"/>
</dbReference>
<dbReference type="GO" id="GO:0046872">
    <property type="term" value="F:metal ion binding"/>
    <property type="evidence" value="ECO:0007669"/>
    <property type="project" value="UniProtKB-KW"/>
</dbReference>
<dbReference type="GO" id="GO:0061603">
    <property type="term" value="F:molybdenum cofactor guanylyltransferase activity"/>
    <property type="evidence" value="ECO:0007669"/>
    <property type="project" value="UniProtKB-EC"/>
</dbReference>
<dbReference type="GO" id="GO:1902758">
    <property type="term" value="P:bis(molybdopterin guanine dinucleotide)molybdenum biosynthetic process"/>
    <property type="evidence" value="ECO:0007669"/>
    <property type="project" value="TreeGrafter"/>
</dbReference>
<dbReference type="CDD" id="cd02503">
    <property type="entry name" value="MobA"/>
    <property type="match status" value="1"/>
</dbReference>
<dbReference type="Gene3D" id="3.90.550.10">
    <property type="entry name" value="Spore Coat Polysaccharide Biosynthesis Protein SpsA, Chain A"/>
    <property type="match status" value="1"/>
</dbReference>
<dbReference type="HAMAP" id="MF_00316">
    <property type="entry name" value="MobA"/>
    <property type="match status" value="1"/>
</dbReference>
<dbReference type="InterPro" id="IPR025877">
    <property type="entry name" value="MobA-like_NTP_Trfase"/>
</dbReference>
<dbReference type="InterPro" id="IPR013482">
    <property type="entry name" value="Molybde_CF_guanTrfase"/>
</dbReference>
<dbReference type="InterPro" id="IPR029044">
    <property type="entry name" value="Nucleotide-diphossugar_trans"/>
</dbReference>
<dbReference type="NCBIfam" id="TIGR02665">
    <property type="entry name" value="molyb_mobA"/>
    <property type="match status" value="1"/>
</dbReference>
<dbReference type="PANTHER" id="PTHR19136">
    <property type="entry name" value="MOLYBDENUM COFACTOR GUANYLYLTRANSFERASE"/>
    <property type="match status" value="1"/>
</dbReference>
<dbReference type="PANTHER" id="PTHR19136:SF81">
    <property type="entry name" value="MOLYBDENUM COFACTOR GUANYLYLTRANSFERASE"/>
    <property type="match status" value="1"/>
</dbReference>
<dbReference type="Pfam" id="PF12804">
    <property type="entry name" value="NTP_transf_3"/>
    <property type="match status" value="1"/>
</dbReference>
<dbReference type="SUPFAM" id="SSF53448">
    <property type="entry name" value="Nucleotide-diphospho-sugar transferases"/>
    <property type="match status" value="1"/>
</dbReference>
<accession>A8FPG1</accession>
<keyword id="KW-0963">Cytoplasm</keyword>
<keyword id="KW-0342">GTP-binding</keyword>
<keyword id="KW-0460">Magnesium</keyword>
<keyword id="KW-0479">Metal-binding</keyword>
<keyword id="KW-0501">Molybdenum cofactor biosynthesis</keyword>
<keyword id="KW-0547">Nucleotide-binding</keyword>
<keyword id="KW-1185">Reference proteome</keyword>
<keyword id="KW-0808">Transferase</keyword>
<name>MOBA_SHESH</name>
<proteinExistence type="inferred from homology"/>
<evidence type="ECO:0000255" key="1">
    <source>
        <dbReference type="HAMAP-Rule" id="MF_00316"/>
    </source>
</evidence>
<gene>
    <name evidence="1" type="primary">mobA</name>
    <name type="ordered locus">Ssed_0121</name>
</gene>
<comment type="function">
    <text evidence="1">Transfers a GMP moiety from GTP to Mo-molybdopterin (Mo-MPT) cofactor (Moco or molybdenum cofactor) to form Mo-molybdopterin guanine dinucleotide (Mo-MGD) cofactor.</text>
</comment>
<comment type="catalytic activity">
    <reaction evidence="1">
        <text>Mo-molybdopterin + GTP + H(+) = Mo-molybdopterin guanine dinucleotide + diphosphate</text>
        <dbReference type="Rhea" id="RHEA:34243"/>
        <dbReference type="ChEBI" id="CHEBI:15378"/>
        <dbReference type="ChEBI" id="CHEBI:33019"/>
        <dbReference type="ChEBI" id="CHEBI:37565"/>
        <dbReference type="ChEBI" id="CHEBI:71302"/>
        <dbReference type="ChEBI" id="CHEBI:71310"/>
        <dbReference type="EC" id="2.7.7.77"/>
    </reaction>
</comment>
<comment type="cofactor">
    <cofactor evidence="1">
        <name>Mg(2+)</name>
        <dbReference type="ChEBI" id="CHEBI:18420"/>
    </cofactor>
</comment>
<comment type="subunit">
    <text evidence="1">Monomer.</text>
</comment>
<comment type="subcellular location">
    <subcellularLocation>
        <location evidence="1">Cytoplasm</location>
    </subcellularLocation>
</comment>
<comment type="domain">
    <text evidence="1">The N-terminal domain determines nucleotide recognition and specific binding, while the C-terminal domain determines the specific binding to the target protein.</text>
</comment>
<comment type="similarity">
    <text evidence="1">Belongs to the MobA family.</text>
</comment>
<sequence>MSLQIDAVILAGGMARRMGGNDKGLVELQAQPMIKHAIDRIKPQVREILINANRNQTRYAEFGYQVISDEDSGYLGPLAGMITAMGQTQAKYLLVVPCDCPLLPADLVERMLSQLEKENADLAVASDGKREQPVVLLLKPELRDSMKAFLDAGERKIDFWYAKHNCAVADFSDQPNAFVNVNTPEQKQQLSEAIAK</sequence>
<reference key="1">
    <citation type="submission" date="2007-08" db="EMBL/GenBank/DDBJ databases">
        <title>Complete sequence of Shewanella sediminis HAW-EB3.</title>
        <authorList>
            <consortium name="US DOE Joint Genome Institute"/>
            <person name="Copeland A."/>
            <person name="Lucas S."/>
            <person name="Lapidus A."/>
            <person name="Barry K."/>
            <person name="Glavina del Rio T."/>
            <person name="Dalin E."/>
            <person name="Tice H."/>
            <person name="Pitluck S."/>
            <person name="Chertkov O."/>
            <person name="Brettin T."/>
            <person name="Bruce D."/>
            <person name="Detter J.C."/>
            <person name="Han C."/>
            <person name="Schmutz J."/>
            <person name="Larimer F."/>
            <person name="Land M."/>
            <person name="Hauser L."/>
            <person name="Kyrpides N."/>
            <person name="Kim E."/>
            <person name="Zhao J.-S."/>
            <person name="Richardson P."/>
        </authorList>
    </citation>
    <scope>NUCLEOTIDE SEQUENCE [LARGE SCALE GENOMIC DNA]</scope>
    <source>
        <strain>HAW-EB3</strain>
    </source>
</reference>